<dbReference type="EMBL" id="FM200053">
    <property type="protein sequence ID" value="CAR58183.1"/>
    <property type="molecule type" value="Genomic_DNA"/>
</dbReference>
<dbReference type="RefSeq" id="WP_000692187.1">
    <property type="nucleotide sequence ID" value="NC_011147.1"/>
</dbReference>
<dbReference type="SMR" id="B5BL59"/>
<dbReference type="KEGG" id="sek:SSPA0072"/>
<dbReference type="HOGENOM" id="CLU_060196_2_2_6"/>
<dbReference type="UniPathway" id="UPA00117"/>
<dbReference type="Proteomes" id="UP000001869">
    <property type="component" value="Chromosome"/>
</dbReference>
<dbReference type="GO" id="GO:0009055">
    <property type="term" value="F:electron transfer activity"/>
    <property type="evidence" value="ECO:0007669"/>
    <property type="project" value="InterPro"/>
</dbReference>
<dbReference type="GO" id="GO:0009437">
    <property type="term" value="P:carnitine metabolic process"/>
    <property type="evidence" value="ECO:0007669"/>
    <property type="project" value="UniProtKB-UniRule"/>
</dbReference>
<dbReference type="CDD" id="cd01714">
    <property type="entry name" value="ETF_beta"/>
    <property type="match status" value="1"/>
</dbReference>
<dbReference type="FunFam" id="3.40.50.620:FF:000072">
    <property type="entry name" value="Protein FixA homolog"/>
    <property type="match status" value="1"/>
</dbReference>
<dbReference type="Gene3D" id="3.40.50.620">
    <property type="entry name" value="HUPs"/>
    <property type="match status" value="1"/>
</dbReference>
<dbReference type="HAMAP" id="MF_01055">
    <property type="entry name" value="FixA"/>
    <property type="match status" value="1"/>
</dbReference>
<dbReference type="InterPro" id="IPR000049">
    <property type="entry name" value="ET-Flavoprotein_bsu_CS"/>
</dbReference>
<dbReference type="InterPro" id="IPR014730">
    <property type="entry name" value="ETF_a/b_N"/>
</dbReference>
<dbReference type="InterPro" id="IPR012255">
    <property type="entry name" value="ETF_b"/>
</dbReference>
<dbReference type="InterPro" id="IPR033948">
    <property type="entry name" value="ETF_beta_N"/>
</dbReference>
<dbReference type="InterPro" id="IPR023463">
    <property type="entry name" value="FixA"/>
</dbReference>
<dbReference type="InterPro" id="IPR014729">
    <property type="entry name" value="Rossmann-like_a/b/a_fold"/>
</dbReference>
<dbReference type="NCBIfam" id="NF002888">
    <property type="entry name" value="PRK03359.1"/>
    <property type="match status" value="1"/>
</dbReference>
<dbReference type="PANTHER" id="PTHR21294">
    <property type="entry name" value="ELECTRON TRANSFER FLAVOPROTEIN BETA-SUBUNIT"/>
    <property type="match status" value="1"/>
</dbReference>
<dbReference type="PANTHER" id="PTHR21294:SF17">
    <property type="entry name" value="PROTEIN FIXA"/>
    <property type="match status" value="1"/>
</dbReference>
<dbReference type="Pfam" id="PF01012">
    <property type="entry name" value="ETF"/>
    <property type="match status" value="1"/>
</dbReference>
<dbReference type="PIRSF" id="PIRSF000090">
    <property type="entry name" value="Beta-ETF"/>
    <property type="match status" value="1"/>
</dbReference>
<dbReference type="SMART" id="SM00893">
    <property type="entry name" value="ETF"/>
    <property type="match status" value="1"/>
</dbReference>
<dbReference type="SUPFAM" id="SSF52402">
    <property type="entry name" value="Adenine nucleotide alpha hydrolases-like"/>
    <property type="match status" value="1"/>
</dbReference>
<dbReference type="PROSITE" id="PS01065">
    <property type="entry name" value="ETF_BETA"/>
    <property type="match status" value="1"/>
</dbReference>
<protein>
    <recommendedName>
        <fullName evidence="1">Protein FixA</fullName>
    </recommendedName>
</protein>
<proteinExistence type="inferred from homology"/>
<feature type="chain" id="PRO_1000136326" description="Protein FixA">
    <location>
        <begin position="1"/>
        <end position="256"/>
    </location>
</feature>
<gene>
    <name evidence="1" type="primary">fixA</name>
    <name type="ordered locus">SSPA0072</name>
</gene>
<keyword id="KW-0249">Electron transport</keyword>
<keyword id="KW-0813">Transport</keyword>
<reference key="1">
    <citation type="journal article" date="2009" name="BMC Genomics">
        <title>Pseudogene accumulation in the evolutionary histories of Salmonella enterica serovars Paratyphi A and Typhi.</title>
        <authorList>
            <person name="Holt K.E."/>
            <person name="Thomson N.R."/>
            <person name="Wain J."/>
            <person name="Langridge G.C."/>
            <person name="Hasan R."/>
            <person name="Bhutta Z.A."/>
            <person name="Quail M.A."/>
            <person name="Norbertczak H."/>
            <person name="Walker D."/>
            <person name="Simmonds M."/>
            <person name="White B."/>
            <person name="Bason N."/>
            <person name="Mungall K."/>
            <person name="Dougan G."/>
            <person name="Parkhill J."/>
        </authorList>
    </citation>
    <scope>NUCLEOTIDE SEQUENCE [LARGE SCALE GENOMIC DNA]</scope>
    <source>
        <strain>AKU_12601</strain>
    </source>
</reference>
<comment type="function">
    <text evidence="1">Required for anaerobic carnitine reduction. May bring reductant to CaiA.</text>
</comment>
<comment type="pathway">
    <text evidence="1">Amine and polyamine metabolism; carnitine metabolism.</text>
</comment>
<comment type="subunit">
    <text evidence="1">Heterodimer of FixA and FixB.</text>
</comment>
<comment type="similarity">
    <text evidence="1">Belongs to the ETF beta-subunit/FixA family.</text>
</comment>
<sequence>MKIITCYKCVPDEQDIAINNADGTLDFSKADSKISQYDLNAIEAACQLKQQLGDAQVVAMSVGGKALTNAKGRKDVLSRGPDELIVVIDDQFEQALPQHTATALAAAAQKSGFDLLICGDGSSDLYAQQVGLLVGEALNIPAINGVSKILSLTDSTLTVERELEDEVETLSIPLPAVIAVSTDINTPQIPSMKAILGAAKKPVQVWSPADIGLNSVPAYSTQQVAAPKQRERQRVVIEGDGEEQIAAFVENLRKII</sequence>
<evidence type="ECO:0000255" key="1">
    <source>
        <dbReference type="HAMAP-Rule" id="MF_01055"/>
    </source>
</evidence>
<accession>B5BL59</accession>
<organism>
    <name type="scientific">Salmonella paratyphi A (strain AKU_12601)</name>
    <dbReference type="NCBI Taxonomy" id="554290"/>
    <lineage>
        <taxon>Bacteria</taxon>
        <taxon>Pseudomonadati</taxon>
        <taxon>Pseudomonadota</taxon>
        <taxon>Gammaproteobacteria</taxon>
        <taxon>Enterobacterales</taxon>
        <taxon>Enterobacteriaceae</taxon>
        <taxon>Salmonella</taxon>
    </lineage>
</organism>
<name>FIXA_SALPK</name>